<evidence type="ECO:0000250" key="1"/>
<evidence type="ECO:0000250" key="2">
    <source>
        <dbReference type="UniProtKB" id="P08727"/>
    </source>
</evidence>
<evidence type="ECO:0000255" key="3">
    <source>
        <dbReference type="PROSITE-ProRule" id="PRU01188"/>
    </source>
</evidence>
<evidence type="ECO:0000269" key="4">
    <source>
    </source>
</evidence>
<evidence type="ECO:0000269" key="5">
    <source>
    </source>
</evidence>
<evidence type="ECO:0000305" key="6"/>
<evidence type="ECO:0007744" key="7">
    <source>
    </source>
</evidence>
<gene>
    <name type="primary">Krt19</name>
    <name type="synonym">Ka19</name>
    <name type="synonym">Krt1-19</name>
</gene>
<name>K1C19_RAT</name>
<dbReference type="EMBL" id="AY464140">
    <property type="protein sequence ID" value="AAR36876.1"/>
    <property type="molecule type" value="mRNA"/>
</dbReference>
<dbReference type="EMBL" id="AABR03073341">
    <property type="status" value="NOT_ANNOTATED_CDS"/>
    <property type="molecule type" value="Genomic_DNA"/>
</dbReference>
<dbReference type="EMBL" id="BC088424">
    <property type="protein sequence ID" value="AAH88424.1"/>
    <property type="status" value="ALT_INIT"/>
    <property type="molecule type" value="mRNA"/>
</dbReference>
<dbReference type="EMBL" id="BC126075">
    <property type="protein sequence ID" value="AAI26076.1"/>
    <property type="molecule type" value="mRNA"/>
</dbReference>
<dbReference type="EMBL" id="AH006934">
    <property type="protein sequence ID" value="AAC64402.1"/>
    <property type="molecule type" value="Genomic_DNA"/>
</dbReference>
<dbReference type="EMBL" id="X81449">
    <property type="protein sequence ID" value="CAA57205.1"/>
    <property type="molecule type" value="mRNA"/>
</dbReference>
<dbReference type="EMBL" id="BK004046">
    <property type="protein sequence ID" value="DAA04480.1"/>
    <property type="molecule type" value="mRNA"/>
</dbReference>
<dbReference type="RefSeq" id="NP_955792.1">
    <property type="nucleotide sequence ID" value="NM_199498.2"/>
</dbReference>
<dbReference type="SMR" id="Q63279"/>
<dbReference type="BioGRID" id="262079">
    <property type="interactions" value="1"/>
</dbReference>
<dbReference type="FunCoup" id="Q63279">
    <property type="interactions" value="244"/>
</dbReference>
<dbReference type="IntAct" id="Q63279">
    <property type="interactions" value="3"/>
</dbReference>
<dbReference type="STRING" id="10116.ENSRNOP00000019133"/>
<dbReference type="GlyGen" id="Q63279">
    <property type="glycosylation" value="1 site, 1 O-linked glycan (1 site)"/>
</dbReference>
<dbReference type="iPTMnet" id="Q63279"/>
<dbReference type="PhosphoSitePlus" id="Q63279"/>
<dbReference type="jPOST" id="Q63279"/>
<dbReference type="PaxDb" id="10116-ENSRNOP00000019133"/>
<dbReference type="Ensembl" id="ENSRNOT00000019133.5">
    <property type="protein sequence ID" value="ENSRNOP00000019133.3"/>
    <property type="gene ID" value="ENSRNOG00000003899.8"/>
</dbReference>
<dbReference type="GeneID" id="360626"/>
<dbReference type="KEGG" id="rno:360626"/>
<dbReference type="UCSC" id="RGD:619936">
    <property type="organism name" value="rat"/>
</dbReference>
<dbReference type="AGR" id="RGD:619936"/>
<dbReference type="CTD" id="3880"/>
<dbReference type="RGD" id="619936">
    <property type="gene designation" value="Krt19"/>
</dbReference>
<dbReference type="eggNOG" id="ENOG502QV0B">
    <property type="taxonomic scope" value="Eukaryota"/>
</dbReference>
<dbReference type="GeneTree" id="ENSGT00940000154602"/>
<dbReference type="HOGENOM" id="CLU_012560_8_1_1"/>
<dbReference type="InParanoid" id="Q63279"/>
<dbReference type="OrthoDB" id="2441647at2759"/>
<dbReference type="PhylomeDB" id="Q63279"/>
<dbReference type="TreeFam" id="TF332742"/>
<dbReference type="Reactome" id="R-RNO-6805567">
    <property type="pathway name" value="Keratinization"/>
</dbReference>
<dbReference type="Reactome" id="R-RNO-6809371">
    <property type="pathway name" value="Formation of the cornified envelope"/>
</dbReference>
<dbReference type="PRO" id="PR:Q63279"/>
<dbReference type="Proteomes" id="UP000002494">
    <property type="component" value="Chromosome 10"/>
</dbReference>
<dbReference type="Bgee" id="ENSRNOG00000014233">
    <property type="expression patterns" value="Expressed in colon and 18 other cell types or tissues"/>
</dbReference>
<dbReference type="GO" id="GO:0016327">
    <property type="term" value="C:apicolateral plasma membrane"/>
    <property type="evidence" value="ECO:0000266"/>
    <property type="project" value="RGD"/>
</dbReference>
<dbReference type="GO" id="GO:0071944">
    <property type="term" value="C:cell periphery"/>
    <property type="evidence" value="ECO:0000266"/>
    <property type="project" value="RGD"/>
</dbReference>
<dbReference type="GO" id="GO:0043034">
    <property type="term" value="C:costamere"/>
    <property type="evidence" value="ECO:0000266"/>
    <property type="project" value="RGD"/>
</dbReference>
<dbReference type="GO" id="GO:0005856">
    <property type="term" value="C:cytoskeleton"/>
    <property type="evidence" value="ECO:0000318"/>
    <property type="project" value="GO_Central"/>
</dbReference>
<dbReference type="GO" id="GO:0016010">
    <property type="term" value="C:dystrophin-associated glycoprotein complex"/>
    <property type="evidence" value="ECO:0000314"/>
    <property type="project" value="RGD"/>
</dbReference>
<dbReference type="GO" id="GO:0005882">
    <property type="term" value="C:intermediate filament"/>
    <property type="evidence" value="ECO:0007669"/>
    <property type="project" value="UniProtKB-KW"/>
</dbReference>
<dbReference type="GO" id="GO:0005886">
    <property type="term" value="C:plasma membrane"/>
    <property type="evidence" value="ECO:0000266"/>
    <property type="project" value="RGD"/>
</dbReference>
<dbReference type="GO" id="GO:0042383">
    <property type="term" value="C:sarcolemma"/>
    <property type="evidence" value="ECO:0000266"/>
    <property type="project" value="RGD"/>
</dbReference>
<dbReference type="GO" id="GO:1990357">
    <property type="term" value="C:terminal web"/>
    <property type="evidence" value="ECO:0000266"/>
    <property type="project" value="RGD"/>
</dbReference>
<dbReference type="GO" id="GO:0030018">
    <property type="term" value="C:Z disc"/>
    <property type="evidence" value="ECO:0000266"/>
    <property type="project" value="RGD"/>
</dbReference>
<dbReference type="GO" id="GO:0044877">
    <property type="term" value="F:protein-containing complex binding"/>
    <property type="evidence" value="ECO:0000353"/>
    <property type="project" value="RGD"/>
</dbReference>
<dbReference type="GO" id="GO:0008307">
    <property type="term" value="F:structural constituent of muscle"/>
    <property type="evidence" value="ECO:0000266"/>
    <property type="project" value="RGD"/>
</dbReference>
<dbReference type="GO" id="GO:0060706">
    <property type="term" value="P:cell differentiation involved in embryonic placenta development"/>
    <property type="evidence" value="ECO:0000266"/>
    <property type="project" value="RGD"/>
</dbReference>
<dbReference type="GO" id="GO:0030855">
    <property type="term" value="P:epithelial cell differentiation"/>
    <property type="evidence" value="ECO:0000318"/>
    <property type="project" value="GO_Central"/>
</dbReference>
<dbReference type="GO" id="GO:0045109">
    <property type="term" value="P:intermediate filament organization"/>
    <property type="evidence" value="ECO:0000318"/>
    <property type="project" value="GO_Central"/>
</dbReference>
<dbReference type="GO" id="GO:0007219">
    <property type="term" value="P:Notch signaling pathway"/>
    <property type="evidence" value="ECO:0000266"/>
    <property type="project" value="RGD"/>
</dbReference>
<dbReference type="GO" id="GO:0043627">
    <property type="term" value="P:response to estrogen"/>
    <property type="evidence" value="ECO:0000266"/>
    <property type="project" value="RGD"/>
</dbReference>
<dbReference type="GO" id="GO:0045214">
    <property type="term" value="P:sarcomere organization"/>
    <property type="evidence" value="ECO:0000266"/>
    <property type="project" value="RGD"/>
</dbReference>
<dbReference type="FunFam" id="1.20.5.1160:FF:000002">
    <property type="entry name" value="Type I keratin 10"/>
    <property type="match status" value="1"/>
</dbReference>
<dbReference type="FunFam" id="1.20.5.170:FF:000002">
    <property type="entry name" value="Type I keratin KA11"/>
    <property type="match status" value="1"/>
</dbReference>
<dbReference type="FunFam" id="1.20.5.500:FF:000001">
    <property type="entry name" value="Type II keratin 23"/>
    <property type="match status" value="1"/>
</dbReference>
<dbReference type="Gene3D" id="1.20.5.170">
    <property type="match status" value="1"/>
</dbReference>
<dbReference type="Gene3D" id="1.20.5.500">
    <property type="entry name" value="Single helix bin"/>
    <property type="match status" value="1"/>
</dbReference>
<dbReference type="Gene3D" id="1.20.5.1160">
    <property type="entry name" value="Vasodilator-stimulated phosphoprotein"/>
    <property type="match status" value="1"/>
</dbReference>
<dbReference type="InterPro" id="IPR018039">
    <property type="entry name" value="IF_conserved"/>
</dbReference>
<dbReference type="InterPro" id="IPR039008">
    <property type="entry name" value="IF_rod_dom"/>
</dbReference>
<dbReference type="InterPro" id="IPR002957">
    <property type="entry name" value="Keratin_I"/>
</dbReference>
<dbReference type="PANTHER" id="PTHR23239">
    <property type="entry name" value="INTERMEDIATE FILAMENT"/>
    <property type="match status" value="1"/>
</dbReference>
<dbReference type="PANTHER" id="PTHR23239:SF14">
    <property type="entry name" value="KERATIN, TYPE I CYTOSKELETAL 19"/>
    <property type="match status" value="1"/>
</dbReference>
<dbReference type="Pfam" id="PF00038">
    <property type="entry name" value="Filament"/>
    <property type="match status" value="1"/>
</dbReference>
<dbReference type="PRINTS" id="PR01248">
    <property type="entry name" value="TYPE1KERATIN"/>
</dbReference>
<dbReference type="SMART" id="SM01391">
    <property type="entry name" value="Filament"/>
    <property type="match status" value="1"/>
</dbReference>
<dbReference type="SUPFAM" id="SSF64593">
    <property type="entry name" value="Intermediate filament protein, coiled coil region"/>
    <property type="match status" value="2"/>
</dbReference>
<dbReference type="SUPFAM" id="SSF46579">
    <property type="entry name" value="Prefoldin"/>
    <property type="match status" value="1"/>
</dbReference>
<dbReference type="PROSITE" id="PS00226">
    <property type="entry name" value="IF_ROD_1"/>
    <property type="match status" value="1"/>
</dbReference>
<dbReference type="PROSITE" id="PS51842">
    <property type="entry name" value="IF_ROD_2"/>
    <property type="match status" value="1"/>
</dbReference>
<keyword id="KW-0175">Coiled coil</keyword>
<keyword id="KW-0903">Direct protein sequencing</keyword>
<keyword id="KW-0403">Intermediate filament</keyword>
<keyword id="KW-0416">Keratin</keyword>
<keyword id="KW-0488">Methylation</keyword>
<keyword id="KW-0597">Phosphoprotein</keyword>
<keyword id="KW-1185">Reference proteome</keyword>
<comment type="function">
    <text evidence="1">Involved in the organization of myofibers. Together with KRT8, helps to link the contractile apparatus to dystrophin at the costameres of striated muscle (By similarity).</text>
</comment>
<comment type="subunit">
    <text evidence="1 4">Heterotetramer of two type I and two type II keratins. Interacts with PNN (By similarity). Interacts with the actin-binding domain of DMD.</text>
</comment>
<comment type="interaction">
    <interactant intactId="EBI-876985">
        <id>Q63279</id>
    </interactant>
    <interactant intactId="EBI-706166">
        <id>P11530</id>
        <label>Dmd</label>
    </interactant>
    <organismsDiffer>false</organismsDiffer>
    <experiments>3</experiments>
</comment>
<comment type="tissue specificity">
    <text evidence="4 5">Expressed in brain, heart, skin and in costameres of myoplasm at the sarcolemmal membrane in skeletal and cardiac muscle fibers. Undifferentiated gonads and somatic cells of ovarian cords throughout the fetal ovary development.</text>
</comment>
<comment type="developmental stage">
    <text evidence="5">Found in somatic cells of ovarian cords throughout the fetal ovary development.</text>
</comment>
<comment type="domain">
    <text>This keratin differs from all other IF proteins in lacking the C-terminal tail domain.</text>
</comment>
<comment type="miscellaneous">
    <text>There are two types of cytoskeletal and microfibrillar keratin: I (acidic; 40-55 kDa) and II (neutral to basic; 56-70 kDa).</text>
</comment>
<comment type="similarity">
    <text evidence="3">Belongs to the intermediate filament family.</text>
</comment>
<comment type="sequence caution" evidence="6">
    <conflict type="erroneous initiation">
        <sequence resource="EMBL-CDS" id="AAH88424"/>
    </conflict>
</comment>
<organism>
    <name type="scientific">Rattus norvegicus</name>
    <name type="common">Rat</name>
    <dbReference type="NCBI Taxonomy" id="10116"/>
    <lineage>
        <taxon>Eukaryota</taxon>
        <taxon>Metazoa</taxon>
        <taxon>Chordata</taxon>
        <taxon>Craniata</taxon>
        <taxon>Vertebrata</taxon>
        <taxon>Euteleostomi</taxon>
        <taxon>Mammalia</taxon>
        <taxon>Eutheria</taxon>
        <taxon>Euarchontoglires</taxon>
        <taxon>Glires</taxon>
        <taxon>Rodentia</taxon>
        <taxon>Myomorpha</taxon>
        <taxon>Muroidea</taxon>
        <taxon>Muridae</taxon>
        <taxon>Murinae</taxon>
        <taxon>Rattus</taxon>
    </lineage>
</organism>
<reference key="1">
    <citation type="journal article" date="2004" name="J. Biol. Chem.">
        <title>Cloning and characterization of cytokeratins 8 and 19 in adult rat striated muscle. Interaction with the dystrophin glycoprotein complex.</title>
        <authorList>
            <person name="Ursitti J.A."/>
            <person name="Lee P.C."/>
            <person name="Resneck W.G."/>
            <person name="McNally M.M."/>
            <person name="Bowman A.L."/>
            <person name="O'Neill A."/>
            <person name="Stone M.R."/>
            <person name="Bloch R.J."/>
        </authorList>
    </citation>
    <scope>NUCLEOTIDE SEQUENCE [MRNA]</scope>
    <scope>INTERACTION WITH DMD</scope>
    <scope>TISSUE SPECIFICITY</scope>
    <source>
        <tissue>Heart muscle</tissue>
    </source>
</reference>
<reference key="2">
    <citation type="journal article" date="2004" name="Nature">
        <title>Genome sequence of the Brown Norway rat yields insights into mammalian evolution.</title>
        <authorList>
            <person name="Gibbs R.A."/>
            <person name="Weinstock G.M."/>
            <person name="Metzker M.L."/>
            <person name="Muzny D.M."/>
            <person name="Sodergren E.J."/>
            <person name="Scherer S."/>
            <person name="Scott G."/>
            <person name="Steffen D."/>
            <person name="Worley K.C."/>
            <person name="Burch P.E."/>
            <person name="Okwuonu G."/>
            <person name="Hines S."/>
            <person name="Lewis L."/>
            <person name="Deramo C."/>
            <person name="Delgado O."/>
            <person name="Dugan-Rocha S."/>
            <person name="Miner G."/>
            <person name="Morgan M."/>
            <person name="Hawes A."/>
            <person name="Gill R."/>
            <person name="Holt R.A."/>
            <person name="Adams M.D."/>
            <person name="Amanatides P.G."/>
            <person name="Baden-Tillson H."/>
            <person name="Barnstead M."/>
            <person name="Chin S."/>
            <person name="Evans C.A."/>
            <person name="Ferriera S."/>
            <person name="Fosler C."/>
            <person name="Glodek A."/>
            <person name="Gu Z."/>
            <person name="Jennings D."/>
            <person name="Kraft C.L."/>
            <person name="Nguyen T."/>
            <person name="Pfannkoch C.M."/>
            <person name="Sitter C."/>
            <person name="Sutton G.G."/>
            <person name="Venter J.C."/>
            <person name="Woodage T."/>
            <person name="Smith D."/>
            <person name="Lee H.-M."/>
            <person name="Gustafson E."/>
            <person name="Cahill P."/>
            <person name="Kana A."/>
            <person name="Doucette-Stamm L."/>
            <person name="Weinstock K."/>
            <person name="Fechtel K."/>
            <person name="Weiss R.B."/>
            <person name="Dunn D.M."/>
            <person name="Green E.D."/>
            <person name="Blakesley R.W."/>
            <person name="Bouffard G.G."/>
            <person name="De Jong P.J."/>
            <person name="Osoegawa K."/>
            <person name="Zhu B."/>
            <person name="Marra M."/>
            <person name="Schein J."/>
            <person name="Bosdet I."/>
            <person name="Fjell C."/>
            <person name="Jones S."/>
            <person name="Krzywinski M."/>
            <person name="Mathewson C."/>
            <person name="Siddiqui A."/>
            <person name="Wye N."/>
            <person name="McPherson J."/>
            <person name="Zhao S."/>
            <person name="Fraser C.M."/>
            <person name="Shetty J."/>
            <person name="Shatsman S."/>
            <person name="Geer K."/>
            <person name="Chen Y."/>
            <person name="Abramzon S."/>
            <person name="Nierman W.C."/>
            <person name="Havlak P.H."/>
            <person name="Chen R."/>
            <person name="Durbin K.J."/>
            <person name="Egan A."/>
            <person name="Ren Y."/>
            <person name="Song X.-Z."/>
            <person name="Li B."/>
            <person name="Liu Y."/>
            <person name="Qin X."/>
            <person name="Cawley S."/>
            <person name="Cooney A.J."/>
            <person name="D'Souza L.M."/>
            <person name="Martin K."/>
            <person name="Wu J.Q."/>
            <person name="Gonzalez-Garay M.L."/>
            <person name="Jackson A.R."/>
            <person name="Kalafus K.J."/>
            <person name="McLeod M.P."/>
            <person name="Milosavljevic A."/>
            <person name="Virk D."/>
            <person name="Volkov A."/>
            <person name="Wheeler D.A."/>
            <person name="Zhang Z."/>
            <person name="Bailey J.A."/>
            <person name="Eichler E.E."/>
            <person name="Tuzun E."/>
            <person name="Birney E."/>
            <person name="Mongin E."/>
            <person name="Ureta-Vidal A."/>
            <person name="Woodwark C."/>
            <person name="Zdobnov E."/>
            <person name="Bork P."/>
            <person name="Suyama M."/>
            <person name="Torrents D."/>
            <person name="Alexandersson M."/>
            <person name="Trask B.J."/>
            <person name="Young J.M."/>
            <person name="Huang H."/>
            <person name="Wang H."/>
            <person name="Xing H."/>
            <person name="Daniels S."/>
            <person name="Gietzen D."/>
            <person name="Schmidt J."/>
            <person name="Stevens K."/>
            <person name="Vitt U."/>
            <person name="Wingrove J."/>
            <person name="Camara F."/>
            <person name="Mar Alba M."/>
            <person name="Abril J.F."/>
            <person name="Guigo R."/>
            <person name="Smit A."/>
            <person name="Dubchak I."/>
            <person name="Rubin E.M."/>
            <person name="Couronne O."/>
            <person name="Poliakov A."/>
            <person name="Huebner N."/>
            <person name="Ganten D."/>
            <person name="Goesele C."/>
            <person name="Hummel O."/>
            <person name="Kreitler T."/>
            <person name="Lee Y.-A."/>
            <person name="Monti J."/>
            <person name="Schulz H."/>
            <person name="Zimdahl H."/>
            <person name="Himmelbauer H."/>
            <person name="Lehrach H."/>
            <person name="Jacob H.J."/>
            <person name="Bromberg S."/>
            <person name="Gullings-Handley J."/>
            <person name="Jensen-Seaman M.I."/>
            <person name="Kwitek A.E."/>
            <person name="Lazar J."/>
            <person name="Pasko D."/>
            <person name="Tonellato P.J."/>
            <person name="Twigger S."/>
            <person name="Ponting C.P."/>
            <person name="Duarte J.M."/>
            <person name="Rice S."/>
            <person name="Goodstadt L."/>
            <person name="Beatson S.A."/>
            <person name="Emes R.D."/>
            <person name="Winter E.E."/>
            <person name="Webber C."/>
            <person name="Brandt P."/>
            <person name="Nyakatura G."/>
            <person name="Adetobi M."/>
            <person name="Chiaromonte F."/>
            <person name="Elnitski L."/>
            <person name="Eswara P."/>
            <person name="Hardison R.C."/>
            <person name="Hou M."/>
            <person name="Kolbe D."/>
            <person name="Makova K."/>
            <person name="Miller W."/>
            <person name="Nekrutenko A."/>
            <person name="Riemer C."/>
            <person name="Schwartz S."/>
            <person name="Taylor J."/>
            <person name="Yang S."/>
            <person name="Zhang Y."/>
            <person name="Lindpaintner K."/>
            <person name="Andrews T.D."/>
            <person name="Caccamo M."/>
            <person name="Clamp M."/>
            <person name="Clarke L."/>
            <person name="Curwen V."/>
            <person name="Durbin R.M."/>
            <person name="Eyras E."/>
            <person name="Searle S.M."/>
            <person name="Cooper G.M."/>
            <person name="Batzoglou S."/>
            <person name="Brudno M."/>
            <person name="Sidow A."/>
            <person name="Stone E.A."/>
            <person name="Payseur B.A."/>
            <person name="Bourque G."/>
            <person name="Lopez-Otin C."/>
            <person name="Puente X.S."/>
            <person name="Chakrabarti K."/>
            <person name="Chatterji S."/>
            <person name="Dewey C."/>
            <person name="Pachter L."/>
            <person name="Bray N."/>
            <person name="Yap V.B."/>
            <person name="Caspi A."/>
            <person name="Tesler G."/>
            <person name="Pevzner P.A."/>
            <person name="Haussler D."/>
            <person name="Roskin K.M."/>
            <person name="Baertsch R."/>
            <person name="Clawson H."/>
            <person name="Furey T.S."/>
            <person name="Hinrichs A.S."/>
            <person name="Karolchik D."/>
            <person name="Kent W.J."/>
            <person name="Rosenbloom K.R."/>
            <person name="Trumbower H."/>
            <person name="Weirauch M."/>
            <person name="Cooper D.N."/>
            <person name="Stenson P.D."/>
            <person name="Ma B."/>
            <person name="Brent M."/>
            <person name="Arumugam M."/>
            <person name="Shteynberg D."/>
            <person name="Copley R.R."/>
            <person name="Taylor M.S."/>
            <person name="Riethman H."/>
            <person name="Mudunuri U."/>
            <person name="Peterson J."/>
            <person name="Guyer M."/>
            <person name="Felsenfeld A."/>
            <person name="Old S."/>
            <person name="Mockrin S."/>
            <person name="Collins F.S."/>
        </authorList>
    </citation>
    <scope>NUCLEOTIDE SEQUENCE [LARGE SCALE GENOMIC DNA]</scope>
    <source>
        <strain>Brown Norway</strain>
    </source>
</reference>
<reference key="3">
    <citation type="journal article" date="2004" name="Genome Res.">
        <title>The status, quality, and expansion of the NIH full-length cDNA project: the Mammalian Gene Collection (MGC).</title>
        <authorList>
            <consortium name="The MGC Project Team"/>
        </authorList>
    </citation>
    <scope>NUCLEOTIDE SEQUENCE [LARGE SCALE MRNA]</scope>
    <source>
        <tissue>Lung</tissue>
        <tissue>Placenta</tissue>
    </source>
</reference>
<reference key="4">
    <citation type="submission" date="1998-09" db="EMBL/GenBank/DDBJ databases">
        <title>Sex-dependent expression of keratin 19 in differentiating fetal rat gonads. Repressive effect of anti-Mullerian hormone on K19 gene transcription.</title>
        <authorList>
            <person name="Appert A."/>
            <person name="Perlman S."/>
            <person name="Cate R."/>
            <person name="Laverriere J.N."/>
            <person name="Vigier B."/>
            <person name="Magre S."/>
        </authorList>
    </citation>
    <scope>NUCLEOTIDE SEQUENCE [GENOMIC DNA] OF 1-123</scope>
    <source>
        <strain>Wistar</strain>
    </source>
</reference>
<reference key="5">
    <citation type="journal article" date="1995" name="Mech. Dev.">
        <title>Switch in the expression of the K19/K18 keratin genes as a very early evidence of testicular differentiation in the rat.</title>
        <authorList>
            <person name="Fridmacher V."/>
            <person name="le Bert M."/>
            <person name="Guillou F."/>
            <person name="Magre S."/>
        </authorList>
    </citation>
    <scope>NUCLEOTIDE SEQUENCE [MRNA] OF 114-368</scope>
    <scope>TISSUE SPECIFICITY</scope>
    <scope>DEVELOPMENTAL STAGE</scope>
    <source>
        <strain>Wistar</strain>
    </source>
</reference>
<reference key="6">
    <citation type="submission" date="2007-04" db="UniProtKB">
        <authorList>
            <person name="Lubec G."/>
            <person name="Diao W."/>
            <person name="Chen W.-Q."/>
        </authorList>
    </citation>
    <scope>PROTEIN SEQUENCE OF 94-100 AND 163-169</scope>
    <scope>IDENTIFICATION BY MASS SPECTROMETRY</scope>
    <source>
        <strain>Sprague-Dawley</strain>
        <tissue>Hippocampus</tissue>
    </source>
</reference>
<reference key="7">
    <citation type="journal article" date="2004" name="Eur. J. Cell Biol.">
        <title>Comprehensive analysis of keratin gene clusters in humans and rodents.</title>
        <authorList>
            <person name="Hesse M."/>
            <person name="Zimek A."/>
            <person name="Weber K."/>
            <person name="Magin T.M."/>
        </authorList>
    </citation>
    <scope>GENE MODEL</scope>
</reference>
<reference key="8">
    <citation type="journal article" date="2012" name="Nat. Commun.">
        <title>Quantitative maps of protein phosphorylation sites across 14 different rat organs and tissues.</title>
        <authorList>
            <person name="Lundby A."/>
            <person name="Secher A."/>
            <person name="Lage K."/>
            <person name="Nordsborg N.B."/>
            <person name="Dmytriyev A."/>
            <person name="Lundby C."/>
            <person name="Olsen J.V."/>
        </authorList>
    </citation>
    <scope>PHOSPHORYLATION [LARGE SCALE ANALYSIS] AT SER-27; SER-35; SER-40; SER-57 AND SER-67</scope>
    <scope>IDENTIFICATION BY MASS SPECTROMETRY [LARGE SCALE ANALYSIS]</scope>
</reference>
<sequence>MTSYSYRQSSAMSSYGGMGGGPVRFGSGGVFRAPSIHGGSGGRGVSVSSTRIVSSSSGGYVGGRGGSFSGALTVTDGLLGGNEKITMQNLNDRLASYLDKVRALEQANGELEVKIRDWYQKQGPGPFRDYSQYFKTIEDLRDKILGATIENSKIVLQIDNARLAADDFRTKFETEQALRMSVEADINGLRRVLDELTLARTDLEMQIENLKEELAYLKKNHEEEISALRSQVGGQVSVEVDSTPGIDLAKILSEMRSQYEAMAEKNRKDAEAWYLTQIDELNTQVAVHTTQIQINKTEVTELRRKVQDLEIELQSQLSMKAALEGTVAEIEARYGAQLSHIQGVISSIEVQLSNVRADTERQNQEYQQLMDIKSRLEQEIATYRSLLEGQEAHYNSLSIAKAL</sequence>
<protein>
    <recommendedName>
        <fullName>Keratin, type I cytoskeletal 19</fullName>
    </recommendedName>
    <alternativeName>
        <fullName>Cytokeratin-19</fullName>
        <shortName>CK-19</shortName>
    </alternativeName>
    <alternativeName>
        <fullName>Keratin-19</fullName>
        <shortName>K19</shortName>
    </alternativeName>
    <alternativeName>
        <fullName>Type I keratin Ka19</fullName>
    </alternativeName>
</protein>
<proteinExistence type="evidence at protein level"/>
<feature type="chain" id="PRO_0000063674" description="Keratin, type I cytoskeletal 19">
    <location>
        <begin position="1"/>
        <end position="403"/>
    </location>
</feature>
<feature type="domain" description="IF rod" evidence="3">
    <location>
        <begin position="83"/>
        <end position="394"/>
    </location>
</feature>
<feature type="region of interest" description="Head">
    <location>
        <begin position="1"/>
        <end position="82"/>
    </location>
</feature>
<feature type="region of interest" description="Coil 1A">
    <location>
        <begin position="83"/>
        <end position="118"/>
    </location>
</feature>
<feature type="region of interest" description="Linker 1">
    <location>
        <begin position="119"/>
        <end position="136"/>
    </location>
</feature>
<feature type="region of interest" description="Coil 1B">
    <location>
        <begin position="137"/>
        <end position="228"/>
    </location>
</feature>
<feature type="region of interest" description="Linker 12">
    <location>
        <begin position="229"/>
        <end position="251"/>
    </location>
</feature>
<feature type="region of interest" description="Necessary for interaction with PNN" evidence="1">
    <location>
        <begin position="247"/>
        <end position="393"/>
    </location>
</feature>
<feature type="region of interest" description="Coil 2">
    <location>
        <begin position="252"/>
        <end position="390"/>
    </location>
</feature>
<feature type="region of interest" description="Rod-like helical tail">
    <location>
        <begin position="391"/>
        <end position="403"/>
    </location>
</feature>
<feature type="site" description="Stutter">
    <location>
        <position position="270"/>
    </location>
</feature>
<feature type="site" description="Stutter">
    <location>
        <position position="330"/>
    </location>
</feature>
<feature type="modified residue" description="Omega-N-methylarginine" evidence="2">
    <location>
        <position position="7"/>
    </location>
</feature>
<feature type="modified residue" description="Phosphoserine" evidence="2">
    <location>
        <position position="14"/>
    </location>
</feature>
<feature type="modified residue" description="Asymmetric dimethylarginine; alternate" evidence="2">
    <location>
        <position position="24"/>
    </location>
</feature>
<feature type="modified residue" description="Omega-N-methylarginine; alternate" evidence="2">
    <location>
        <position position="24"/>
    </location>
</feature>
<feature type="modified residue" description="Phosphoserine" evidence="7">
    <location>
        <position position="27"/>
    </location>
</feature>
<feature type="modified residue" description="Omega-N-methylarginine" evidence="2">
    <location>
        <position position="32"/>
    </location>
</feature>
<feature type="modified residue" description="Phosphoserine" evidence="7">
    <location>
        <position position="35"/>
    </location>
</feature>
<feature type="modified residue" description="Phosphoserine" evidence="7">
    <location>
        <position position="40"/>
    </location>
</feature>
<feature type="modified residue" description="Omega-N-methylarginine" evidence="2">
    <location>
        <position position="43"/>
    </location>
</feature>
<feature type="modified residue" description="Omega-N-methylarginine" evidence="2">
    <location>
        <position position="51"/>
    </location>
</feature>
<feature type="modified residue" description="Phosphoserine" evidence="7">
    <location>
        <position position="57"/>
    </location>
</feature>
<feature type="modified residue" description="Phosphoserine" evidence="7">
    <location>
        <position position="67"/>
    </location>
</feature>
<feature type="modified residue" description="Phosphothreonine" evidence="2">
    <location>
        <position position="326"/>
    </location>
</feature>
<feature type="modified residue" description="Phosphotyrosine" evidence="2">
    <location>
        <position position="394"/>
    </location>
</feature>
<feature type="modified residue" description="Phosphoserine" evidence="2">
    <location>
        <position position="398"/>
    </location>
</feature>
<feature type="sequence conflict" description="In Ref. 5; CAA57205." evidence="6" ref="5">
    <original>K</original>
    <variation>N</variation>
    <location>
        <position position="143"/>
    </location>
</feature>
<feature type="sequence conflict" description="In Ref. 5; CAA57205." evidence="6" ref="5">
    <original>F</original>
    <variation>L</variation>
    <location>
        <position position="168"/>
    </location>
</feature>
<feature type="sequence conflict" description="In Ref. 5; CAA57205." evidence="6" ref="5">
    <original>A</original>
    <variation>G</variation>
    <location>
        <position position="177"/>
    </location>
</feature>
<feature type="sequence conflict" description="In Ref. 5; CAA57205." evidence="6" ref="5">
    <original>L</original>
    <variation>H</variation>
    <location>
        <position position="248"/>
    </location>
</feature>
<feature type="sequence conflict" description="In Ref. 5; CAA57205." evidence="6" ref="5">
    <original>KN</original>
    <variation>MD</variation>
    <location>
        <begin position="265"/>
        <end position="266"/>
    </location>
</feature>
<feature type="sequence conflict" description="In Ref. 5; CAA57205." evidence="6" ref="5">
    <original>YLTQIDE</original>
    <variation>LLKIDET</variation>
    <location>
        <begin position="274"/>
        <end position="280"/>
    </location>
</feature>
<feature type="sequence conflict" description="In Ref. 5; CAA57205." evidence="6" ref="5">
    <original>R</original>
    <variation>E</variation>
    <location>
        <position position="303"/>
    </location>
</feature>
<feature type="sequence conflict" description="In Ref. 5; CAA57205." evidence="6" ref="5">
    <original>QE</original>
    <variation>HQ</variation>
    <location>
        <begin position="364"/>
        <end position="365"/>
    </location>
</feature>
<accession>Q63279</accession>
<accession>A0JN08</accession>
<accession>Q5M7V2</accession>
<accession>Q6S6J4</accession>
<accession>Q9Z253</accession>